<accession>A4XPU9</accession>
<reference key="1">
    <citation type="submission" date="2007-04" db="EMBL/GenBank/DDBJ databases">
        <title>Complete sequence of Pseudomonas mendocina ymp.</title>
        <authorList>
            <consortium name="US DOE Joint Genome Institute"/>
            <person name="Copeland A."/>
            <person name="Lucas S."/>
            <person name="Lapidus A."/>
            <person name="Barry K."/>
            <person name="Glavina del Rio T."/>
            <person name="Dalin E."/>
            <person name="Tice H."/>
            <person name="Pitluck S."/>
            <person name="Kiss H."/>
            <person name="Brettin T."/>
            <person name="Detter J.C."/>
            <person name="Bruce D."/>
            <person name="Han C."/>
            <person name="Schmutz J."/>
            <person name="Larimer F."/>
            <person name="Land M."/>
            <person name="Hauser L."/>
            <person name="Kyrpides N."/>
            <person name="Mikhailova N."/>
            <person name="Hersman L."/>
            <person name="Dubois J."/>
            <person name="Maurice P."/>
            <person name="Richardson P."/>
        </authorList>
    </citation>
    <scope>NUCLEOTIDE SEQUENCE [LARGE SCALE GENOMIC DNA]</scope>
    <source>
        <strain>ymp</strain>
    </source>
</reference>
<proteinExistence type="inferred from homology"/>
<gene>
    <name evidence="1" type="primary">hldE</name>
    <name type="ordered locus">Pmen_0597</name>
</gene>
<keyword id="KW-0067">ATP-binding</keyword>
<keyword id="KW-0119">Carbohydrate metabolism</keyword>
<keyword id="KW-0418">Kinase</keyword>
<keyword id="KW-0511">Multifunctional enzyme</keyword>
<keyword id="KW-0547">Nucleotide-binding</keyword>
<keyword id="KW-0548">Nucleotidyltransferase</keyword>
<keyword id="KW-0808">Transferase</keyword>
<protein>
    <recommendedName>
        <fullName evidence="1">Bifunctional protein HldE</fullName>
    </recommendedName>
    <domain>
        <recommendedName>
            <fullName evidence="1">D-beta-D-heptose 7-phosphate kinase</fullName>
            <ecNumber evidence="1">2.7.1.167</ecNumber>
        </recommendedName>
        <alternativeName>
            <fullName evidence="1">D-beta-D-heptose 7-phosphotransferase</fullName>
        </alternativeName>
        <alternativeName>
            <fullName evidence="1">D-glycero-beta-D-manno-heptose-7-phosphate kinase</fullName>
        </alternativeName>
    </domain>
    <domain>
        <recommendedName>
            <fullName evidence="1">D-beta-D-heptose 1-phosphate adenylyltransferase</fullName>
            <ecNumber evidence="1">2.7.7.70</ecNumber>
        </recommendedName>
        <alternativeName>
            <fullName evidence="1">D-glycero-beta-D-manno-heptose 1-phosphate adenylyltransferase</fullName>
        </alternativeName>
    </domain>
</protein>
<comment type="function">
    <text evidence="1">Catalyzes the phosphorylation of D-glycero-D-manno-heptose 7-phosphate at the C-1 position to selectively form D-glycero-beta-D-manno-heptose-1,7-bisphosphate.</text>
</comment>
<comment type="function">
    <text evidence="1">Catalyzes the ADP transfer from ATP to D-glycero-beta-D-manno-heptose 1-phosphate, yielding ADP-D-glycero-beta-D-manno-heptose.</text>
</comment>
<comment type="catalytic activity">
    <reaction evidence="1">
        <text>D-glycero-beta-D-manno-heptose 7-phosphate + ATP = D-glycero-beta-D-manno-heptose 1,7-bisphosphate + ADP + H(+)</text>
        <dbReference type="Rhea" id="RHEA:27473"/>
        <dbReference type="ChEBI" id="CHEBI:15378"/>
        <dbReference type="ChEBI" id="CHEBI:30616"/>
        <dbReference type="ChEBI" id="CHEBI:60204"/>
        <dbReference type="ChEBI" id="CHEBI:60208"/>
        <dbReference type="ChEBI" id="CHEBI:456216"/>
        <dbReference type="EC" id="2.7.1.167"/>
    </reaction>
</comment>
<comment type="catalytic activity">
    <reaction evidence="1">
        <text>D-glycero-beta-D-manno-heptose 1-phosphate + ATP + H(+) = ADP-D-glycero-beta-D-manno-heptose + diphosphate</text>
        <dbReference type="Rhea" id="RHEA:27465"/>
        <dbReference type="ChEBI" id="CHEBI:15378"/>
        <dbReference type="ChEBI" id="CHEBI:30616"/>
        <dbReference type="ChEBI" id="CHEBI:33019"/>
        <dbReference type="ChEBI" id="CHEBI:59967"/>
        <dbReference type="ChEBI" id="CHEBI:61593"/>
        <dbReference type="EC" id="2.7.7.70"/>
    </reaction>
</comment>
<comment type="pathway">
    <text evidence="1">Nucleotide-sugar biosynthesis; ADP-L-glycero-beta-D-manno-heptose biosynthesis; ADP-L-glycero-beta-D-manno-heptose from D-glycero-beta-D-manno-heptose 7-phosphate: step 1/4.</text>
</comment>
<comment type="pathway">
    <text evidence="1">Nucleotide-sugar biosynthesis; ADP-L-glycero-beta-D-manno-heptose biosynthesis; ADP-L-glycero-beta-D-manno-heptose from D-glycero-beta-D-manno-heptose 7-phosphate: step 3/4.</text>
</comment>
<comment type="subunit">
    <text evidence="1">Homodimer.</text>
</comment>
<comment type="similarity">
    <text evidence="1">In the N-terminal section; belongs to the carbohydrate kinase PfkB family.</text>
</comment>
<comment type="similarity">
    <text evidence="1">In the C-terminal section; belongs to the cytidylyltransferase family.</text>
</comment>
<dbReference type="EC" id="2.7.1.167" evidence="1"/>
<dbReference type="EC" id="2.7.7.70" evidence="1"/>
<dbReference type="EMBL" id="CP000680">
    <property type="protein sequence ID" value="ABP83365.1"/>
    <property type="molecule type" value="Genomic_DNA"/>
</dbReference>
<dbReference type="SMR" id="A4XPU9"/>
<dbReference type="STRING" id="399739.Pmen_0597"/>
<dbReference type="KEGG" id="pmy:Pmen_0597"/>
<dbReference type="PATRIC" id="fig|399739.8.peg.604"/>
<dbReference type="eggNOG" id="COG0615">
    <property type="taxonomic scope" value="Bacteria"/>
</dbReference>
<dbReference type="eggNOG" id="COG2870">
    <property type="taxonomic scope" value="Bacteria"/>
</dbReference>
<dbReference type="HOGENOM" id="CLU_021150_2_1_6"/>
<dbReference type="OrthoDB" id="9802794at2"/>
<dbReference type="UniPathway" id="UPA00356">
    <property type="reaction ID" value="UER00437"/>
</dbReference>
<dbReference type="UniPathway" id="UPA00356">
    <property type="reaction ID" value="UER00439"/>
</dbReference>
<dbReference type="GO" id="GO:0005829">
    <property type="term" value="C:cytosol"/>
    <property type="evidence" value="ECO:0007669"/>
    <property type="project" value="TreeGrafter"/>
</dbReference>
<dbReference type="GO" id="GO:0005524">
    <property type="term" value="F:ATP binding"/>
    <property type="evidence" value="ECO:0007669"/>
    <property type="project" value="UniProtKB-UniRule"/>
</dbReference>
<dbReference type="GO" id="GO:0033785">
    <property type="term" value="F:heptose 7-phosphate kinase activity"/>
    <property type="evidence" value="ECO:0007669"/>
    <property type="project" value="UniProtKB-UniRule"/>
</dbReference>
<dbReference type="GO" id="GO:0033786">
    <property type="term" value="F:heptose-1-phosphate adenylyltransferase activity"/>
    <property type="evidence" value="ECO:0007669"/>
    <property type="project" value="UniProtKB-UniRule"/>
</dbReference>
<dbReference type="GO" id="GO:0016773">
    <property type="term" value="F:phosphotransferase activity, alcohol group as acceptor"/>
    <property type="evidence" value="ECO:0007669"/>
    <property type="project" value="InterPro"/>
</dbReference>
<dbReference type="GO" id="GO:0097171">
    <property type="term" value="P:ADP-L-glycero-beta-D-manno-heptose biosynthetic process"/>
    <property type="evidence" value="ECO:0007669"/>
    <property type="project" value="UniProtKB-UniPathway"/>
</dbReference>
<dbReference type="CDD" id="cd01172">
    <property type="entry name" value="RfaE_like"/>
    <property type="match status" value="1"/>
</dbReference>
<dbReference type="FunFam" id="3.40.1190.20:FF:000002">
    <property type="entry name" value="Bifunctional protein HldE"/>
    <property type="match status" value="1"/>
</dbReference>
<dbReference type="FunFam" id="3.40.50.620:FF:000028">
    <property type="entry name" value="Bifunctional protein HldE"/>
    <property type="match status" value="1"/>
</dbReference>
<dbReference type="Gene3D" id="3.40.1190.20">
    <property type="match status" value="1"/>
</dbReference>
<dbReference type="Gene3D" id="3.40.50.620">
    <property type="entry name" value="HUPs"/>
    <property type="match status" value="1"/>
</dbReference>
<dbReference type="HAMAP" id="MF_01603">
    <property type="entry name" value="HldE"/>
    <property type="match status" value="1"/>
</dbReference>
<dbReference type="InterPro" id="IPR023030">
    <property type="entry name" value="Bifunc_HldE"/>
</dbReference>
<dbReference type="InterPro" id="IPR002173">
    <property type="entry name" value="Carboh/pur_kinase_PfkB_CS"/>
</dbReference>
<dbReference type="InterPro" id="IPR004821">
    <property type="entry name" value="Cyt_trans-like"/>
</dbReference>
<dbReference type="InterPro" id="IPR011611">
    <property type="entry name" value="PfkB_dom"/>
</dbReference>
<dbReference type="InterPro" id="IPR011913">
    <property type="entry name" value="RfaE_dom_I"/>
</dbReference>
<dbReference type="InterPro" id="IPR011914">
    <property type="entry name" value="RfaE_dom_II"/>
</dbReference>
<dbReference type="InterPro" id="IPR029056">
    <property type="entry name" value="Ribokinase-like"/>
</dbReference>
<dbReference type="InterPro" id="IPR014729">
    <property type="entry name" value="Rossmann-like_a/b/a_fold"/>
</dbReference>
<dbReference type="NCBIfam" id="TIGR00125">
    <property type="entry name" value="cyt_tran_rel"/>
    <property type="match status" value="1"/>
</dbReference>
<dbReference type="NCBIfam" id="NF008454">
    <property type="entry name" value="PRK11316.1"/>
    <property type="match status" value="1"/>
</dbReference>
<dbReference type="NCBIfam" id="TIGR02198">
    <property type="entry name" value="rfaE_dom_I"/>
    <property type="match status" value="1"/>
</dbReference>
<dbReference type="NCBIfam" id="TIGR02199">
    <property type="entry name" value="rfaE_dom_II"/>
    <property type="match status" value="1"/>
</dbReference>
<dbReference type="PANTHER" id="PTHR46969">
    <property type="entry name" value="BIFUNCTIONAL PROTEIN HLDE"/>
    <property type="match status" value="1"/>
</dbReference>
<dbReference type="PANTHER" id="PTHR46969:SF1">
    <property type="entry name" value="BIFUNCTIONAL PROTEIN HLDE"/>
    <property type="match status" value="1"/>
</dbReference>
<dbReference type="Pfam" id="PF01467">
    <property type="entry name" value="CTP_transf_like"/>
    <property type="match status" value="1"/>
</dbReference>
<dbReference type="Pfam" id="PF00294">
    <property type="entry name" value="PfkB"/>
    <property type="match status" value="1"/>
</dbReference>
<dbReference type="SUPFAM" id="SSF52374">
    <property type="entry name" value="Nucleotidylyl transferase"/>
    <property type="match status" value="1"/>
</dbReference>
<dbReference type="SUPFAM" id="SSF53613">
    <property type="entry name" value="Ribokinase-like"/>
    <property type="match status" value="1"/>
</dbReference>
<dbReference type="PROSITE" id="PS00583">
    <property type="entry name" value="PFKB_KINASES_1"/>
    <property type="match status" value="1"/>
</dbReference>
<sequence>MKLTLPRYDQAPVLVVGDVMLDRYWHGGTSRISPEAPVPVVRVEQIEDRPGGAANVALNIAALGAPALLVGVTGEDEAADSLTDSLAAAGVEAHFQRIEDQPTIVKLRVMSRHQQLLRMDFEEPFNTDAAAMAREVEALLAGVKVLVLSDYGKGALQNHQVLIQAARKKGIPVLADPKGKDFSIYRGASLITPNLHEFETIVGGCADEAELVSKGAKLMRELELGALLVTRGEHGMTLLRPEHAPLHLPARAREVFDVTGAGDTVISTLAASIAAGEELPNAVALANLAAGIVVGKLGTAAISAPELRRAVQREEGSERGVLSLDQLLIAIEDARAHGEKIVFTNGCFDILHAGHVTYLEQARAQGDRLIVAINDDASVSRLKGPGRPINAVDRRMAVLAGLGAVDWVVSFAEDTPERLLKQVQPDVLVKGGDYGIDQVVGADIVQAYGGEVRVLGLVENSSTTAIVEKIRNK</sequence>
<name>HLDE_ECTM1</name>
<organism>
    <name type="scientific">Ectopseudomonas mendocina (strain ymp)</name>
    <name type="common">Pseudomonas mendocina</name>
    <dbReference type="NCBI Taxonomy" id="399739"/>
    <lineage>
        <taxon>Bacteria</taxon>
        <taxon>Pseudomonadati</taxon>
        <taxon>Pseudomonadota</taxon>
        <taxon>Gammaproteobacteria</taxon>
        <taxon>Pseudomonadales</taxon>
        <taxon>Pseudomonadaceae</taxon>
        <taxon>Ectopseudomonas</taxon>
    </lineage>
</organism>
<evidence type="ECO:0000255" key="1">
    <source>
        <dbReference type="HAMAP-Rule" id="MF_01603"/>
    </source>
</evidence>
<feature type="chain" id="PRO_1000069400" description="Bifunctional protein HldE">
    <location>
        <begin position="1"/>
        <end position="473"/>
    </location>
</feature>
<feature type="region of interest" description="Ribokinase">
    <location>
        <begin position="1"/>
        <end position="318"/>
    </location>
</feature>
<feature type="region of interest" description="Cytidylyltransferase">
    <location>
        <begin position="343"/>
        <end position="473"/>
    </location>
</feature>
<feature type="active site" evidence="1">
    <location>
        <position position="263"/>
    </location>
</feature>
<feature type="binding site" evidence="1">
    <location>
        <begin position="194"/>
        <end position="197"/>
    </location>
    <ligand>
        <name>ATP</name>
        <dbReference type="ChEBI" id="CHEBI:30616"/>
    </ligand>
</feature>